<feature type="chain" id="PRO_0000424573" description="Protein SHI RELATED SEQUENCE 1">
    <location>
        <begin position="1"/>
        <end position="370"/>
    </location>
</feature>
<feature type="DNA-binding region" description="Zn(2)-C6 fungal-type; degenerate" evidence="1">
    <location>
        <begin position="144"/>
        <end position="171"/>
    </location>
</feature>
<feature type="region of interest" description="Disordered" evidence="2">
    <location>
        <begin position="1"/>
        <end position="37"/>
    </location>
</feature>
<feature type="short sequence motif" description="Required for homo- and heterodimerization">
    <location>
        <begin position="271"/>
        <end position="274"/>
    </location>
</feature>
<feature type="compositionally biased region" description="Gly residues" evidence="2">
    <location>
        <begin position="8"/>
        <end position="19"/>
    </location>
</feature>
<feature type="binding site" evidence="1">
    <location>
        <position position="144"/>
    </location>
    <ligand>
        <name>Zn(2+)</name>
        <dbReference type="ChEBI" id="CHEBI:29105"/>
        <label>1</label>
    </ligand>
</feature>
<feature type="binding site" evidence="1">
    <location>
        <position position="144"/>
    </location>
    <ligand>
        <name>Zn(2+)</name>
        <dbReference type="ChEBI" id="CHEBI:29105"/>
        <label>2</label>
    </ligand>
</feature>
<feature type="binding site" evidence="1">
    <location>
        <position position="147"/>
    </location>
    <ligand>
        <name>Zn(2+)</name>
        <dbReference type="ChEBI" id="CHEBI:29105"/>
        <label>1</label>
    </ligand>
</feature>
<feature type="binding site" evidence="1">
    <location>
        <position position="155"/>
    </location>
    <ligand>
        <name>Zn(2+)</name>
        <dbReference type="ChEBI" id="CHEBI:29105"/>
        <label>1</label>
    </ligand>
</feature>
<feature type="binding site" evidence="1">
    <location>
        <position position="160"/>
    </location>
    <ligand>
        <name>Zn(2+)</name>
        <dbReference type="ChEBI" id="CHEBI:29105"/>
        <label>1</label>
    </ligand>
</feature>
<feature type="binding site" evidence="1">
    <location>
        <position position="160"/>
    </location>
    <ligand>
        <name>Zn(2+)</name>
        <dbReference type="ChEBI" id="CHEBI:29105"/>
        <label>2</label>
    </ligand>
</feature>
<feature type="binding site" evidence="1">
    <location>
        <position position="164"/>
    </location>
    <ligand>
        <name>Zn(2+)</name>
        <dbReference type="ChEBI" id="CHEBI:29105"/>
        <label>2</label>
    </ligand>
</feature>
<feature type="binding site" evidence="1">
    <location>
        <position position="171"/>
    </location>
    <ligand>
        <name>Zn(2+)</name>
        <dbReference type="ChEBI" id="CHEBI:29105"/>
        <label>2</label>
    </ligand>
</feature>
<feature type="splice variant" id="VSP_053445" description="In isoform 2." evidence="10 11">
    <original>FRCVRVSSVEDGEEEFAYQTAVSIGGHIFKGILYDLGPGSSGGGGYNVVAAGESSSGGGGAQQLNLITAGSVTVATASSSTPNLGGIGSSSAAAATYIDPAALYPTPINTFMAGTQFFPNPRS</original>
    <variation>LGACV</variation>
    <location>
        <begin position="248"/>
        <end position="370"/>
    </location>
</feature>
<proteinExistence type="evidence at protein level"/>
<accession>Q9SD40</accession>
<accession>F4J383</accession>
<dbReference type="EMBL" id="AL132980">
    <property type="protein sequence ID" value="CAB62628.1"/>
    <property type="molecule type" value="Genomic_DNA"/>
</dbReference>
<dbReference type="EMBL" id="CP002686">
    <property type="protein sequence ID" value="AEE78745.1"/>
    <property type="molecule type" value="Genomic_DNA"/>
</dbReference>
<dbReference type="EMBL" id="BX824145">
    <property type="status" value="NOT_ANNOTATED_CDS"/>
    <property type="molecule type" value="mRNA"/>
</dbReference>
<dbReference type="EMBL" id="BT029509">
    <property type="protein sequence ID" value="ABL66765.1"/>
    <property type="molecule type" value="mRNA"/>
</dbReference>
<dbReference type="EMBL" id="AB493645">
    <property type="protein sequence ID" value="BAH30483.1"/>
    <property type="molecule type" value="mRNA"/>
</dbReference>
<dbReference type="PIR" id="T45737">
    <property type="entry name" value="T45737"/>
</dbReference>
<dbReference type="RefSeq" id="NP_190675.4">
    <molecule id="Q9SD40-1"/>
    <property type="nucleotide sequence ID" value="NM_114966.6"/>
</dbReference>
<dbReference type="BioGRID" id="9588">
    <property type="interactions" value="8"/>
</dbReference>
<dbReference type="FunCoup" id="Q9SD40">
    <property type="interactions" value="105"/>
</dbReference>
<dbReference type="IntAct" id="Q9SD40">
    <property type="interactions" value="8"/>
</dbReference>
<dbReference type="STRING" id="3702.Q9SD40"/>
<dbReference type="GlyGen" id="Q9SD40">
    <property type="glycosylation" value="1 site"/>
</dbReference>
<dbReference type="PaxDb" id="3702-AT3G51060.1"/>
<dbReference type="ProteomicsDB" id="226565">
    <molecule id="Q9SD40-1"/>
</dbReference>
<dbReference type="EnsemblPlants" id="AT3G51060.1">
    <molecule id="Q9SD40-1"/>
    <property type="protein sequence ID" value="AT3G51060.1"/>
    <property type="gene ID" value="AT3G51060"/>
</dbReference>
<dbReference type="GeneID" id="824270"/>
<dbReference type="Gramene" id="AT3G51060.1">
    <molecule id="Q9SD40-1"/>
    <property type="protein sequence ID" value="AT3G51060.1"/>
    <property type="gene ID" value="AT3G51060"/>
</dbReference>
<dbReference type="KEGG" id="ath:AT3G51060"/>
<dbReference type="Araport" id="AT3G51060"/>
<dbReference type="TAIR" id="AT3G51060">
    <property type="gene designation" value="STY1"/>
</dbReference>
<dbReference type="eggNOG" id="ENOG502QQ15">
    <property type="taxonomic scope" value="Eukaryota"/>
</dbReference>
<dbReference type="HOGENOM" id="CLU_041493_1_0_1"/>
<dbReference type="InParanoid" id="Q9SD40"/>
<dbReference type="OMA" id="CTRIPTH"/>
<dbReference type="PRO" id="PR:Q9SD40"/>
<dbReference type="Proteomes" id="UP000006548">
    <property type="component" value="Chromosome 3"/>
</dbReference>
<dbReference type="ExpressionAtlas" id="Q9SD40">
    <property type="expression patterns" value="baseline and differential"/>
</dbReference>
<dbReference type="GO" id="GO:0005634">
    <property type="term" value="C:nucleus"/>
    <property type="evidence" value="ECO:0000314"/>
    <property type="project" value="TAIR"/>
</dbReference>
<dbReference type="GO" id="GO:0003677">
    <property type="term" value="F:DNA binding"/>
    <property type="evidence" value="ECO:0000314"/>
    <property type="project" value="TAIR"/>
</dbReference>
<dbReference type="GO" id="GO:0003700">
    <property type="term" value="F:DNA-binding transcription factor activity"/>
    <property type="evidence" value="ECO:0007669"/>
    <property type="project" value="InterPro"/>
</dbReference>
<dbReference type="GO" id="GO:0046872">
    <property type="term" value="F:metal ion binding"/>
    <property type="evidence" value="ECO:0007669"/>
    <property type="project" value="UniProtKB-KW"/>
</dbReference>
<dbReference type="GO" id="GO:0046982">
    <property type="term" value="F:protein heterodimerization activity"/>
    <property type="evidence" value="ECO:0000353"/>
    <property type="project" value="TAIR"/>
</dbReference>
<dbReference type="GO" id="GO:0048653">
    <property type="term" value="P:anther development"/>
    <property type="evidence" value="ECO:0000316"/>
    <property type="project" value="TAIR"/>
</dbReference>
<dbReference type="GO" id="GO:0009851">
    <property type="term" value="P:auxin biosynthetic process"/>
    <property type="evidence" value="ECO:0007669"/>
    <property type="project" value="UniProtKB-KW"/>
</dbReference>
<dbReference type="GO" id="GO:0009734">
    <property type="term" value="P:auxin-activated signaling pathway"/>
    <property type="evidence" value="ECO:0007669"/>
    <property type="project" value="UniProtKB-KW"/>
</dbReference>
<dbReference type="GO" id="GO:0009555">
    <property type="term" value="P:pollen development"/>
    <property type="evidence" value="ECO:0000316"/>
    <property type="project" value="TAIR"/>
</dbReference>
<dbReference type="GO" id="GO:0045893">
    <property type="term" value="P:positive regulation of DNA-templated transcription"/>
    <property type="evidence" value="ECO:0000314"/>
    <property type="project" value="TAIR"/>
</dbReference>
<dbReference type="InterPro" id="IPR007818">
    <property type="entry name" value="SHI"/>
</dbReference>
<dbReference type="InterPro" id="IPR006511">
    <property type="entry name" value="SHI_C"/>
</dbReference>
<dbReference type="InterPro" id="IPR006510">
    <property type="entry name" value="Znf_LRP1"/>
</dbReference>
<dbReference type="NCBIfam" id="TIGR01624">
    <property type="entry name" value="LRP1_Cterm"/>
    <property type="match status" value="1"/>
</dbReference>
<dbReference type="NCBIfam" id="TIGR01623">
    <property type="entry name" value="put_zinc_LRP1"/>
    <property type="match status" value="1"/>
</dbReference>
<dbReference type="PANTHER" id="PTHR31604">
    <property type="entry name" value="PROTEIN LATERAL ROOT PRIMORDIUM 1"/>
    <property type="match status" value="1"/>
</dbReference>
<dbReference type="PANTHER" id="PTHR31604:SF36">
    <property type="entry name" value="PROTEIN SHI RELATED SEQUENCE 1-RELATED"/>
    <property type="match status" value="1"/>
</dbReference>
<dbReference type="Pfam" id="PF05142">
    <property type="entry name" value="DUF702"/>
    <property type="match status" value="1"/>
</dbReference>
<sequence>MAGFFSLDGGGGGGGGGGNNQEDHRSNTNPPPPVSEAWLWYRNPNVNANANTNVNANAPSSSNAALGTLELWQNHNQQEIMFQHQQHQQRLDLYSSAAGLGVGPSNHNQFDISGETSTAGAGRAAAMMMIRSGGSGGGSGGVSCQDCGNQAKKDCSHMRCRTCCKSRGFECSTHVRSTWVPAAKRRERQQQLATVQPQTQLPRGESVPKRHRENLPATSSSLVCTRIPSHSGLEVGNFPAEVSSSAVFRCVRVSSVEDGEEEFAYQTAVSIGGHIFKGILYDLGPGSSGGGGYNVVAAGESSSGGGGAQQLNLITAGSVTVATASSSTPNLGGIGSSSAAAATYIDPAALYPTPINTFMAGTQFFPNPRS</sequence>
<comment type="function">
    <text evidence="3 4 5 6 7 9">Transcription activator that binds DNA on 5'-ACTCTAC-3' and promotes auxin homeostasis-regulating gene expression (e.g. YUC genes), as well as genes affecting stamen development, cell expansion and timing of flowering. Synergistically with other SHI-related proteins, regulates gynoecium, stamen and leaf development in a dose-dependent manner, controlling apical-basal patterning. Promotes style and stigma formation, and influences vascular development during gynoecium development. May also have a role in the formation and/or maintenance of the shoot apical meristem (SAM).</text>
</comment>
<comment type="subunit">
    <text>Forms homodimers and heterodimers with LRP1.</text>
</comment>
<comment type="subcellular location">
    <subcellularLocation>
        <location evidence="7">Nucleus</location>
    </subcellularLocation>
</comment>
<comment type="alternative products">
    <event type="alternative splicing"/>
    <isoform>
        <id>Q9SD40-1</id>
        <name>1</name>
        <sequence type="displayed"/>
    </isoform>
    <isoform>
        <id>Q9SD40-2</id>
        <name>2</name>
        <sequence type="described" ref="VSP_053445"/>
    </isoform>
</comment>
<comment type="tissue specificity">
    <text evidence="3">Expressed in flowers, seeds and seedlings.</text>
</comment>
<comment type="developmental stage">
    <text evidence="3">Expressed in the apical parts of the developing gynoecium. Detected throughout the youngest flower primordium. Later relocalizes towards the regions of the presumptive sepal anlagen and remains in sepal primordia until just after their emergence. Also observed on the abaxial side of the young floral meristem. Present in the newly arisen gynoecial primordium. Restricted to the apical parts of the carpels as the open-ended gynoecial cylinder elongates vertically. In the apical regions of the gynoecium, confined to a zone in the interphase between the style and the stigma and fades out later. Within the gynoecium, accumulates in ovule primordia, and, as the ovules developed, restricted to the epidermis of the developing funiculi, to the outer, but not the inner, integuments and to the tip of the nucellus. Also present in the cell layer of the septum that faces the ovary. In the embryo, detected in the cotyledon primordia during late globular to mid heart stage. In addition, transiently expressed in petal and stamen primordia and in the tapetum of the anthers.</text>
</comment>
<comment type="induction">
    <text evidence="8">Regulated by ESR1 and ESR2.</text>
</comment>
<comment type="disruption phenotype">
    <text evidence="3 4 5 6">Gynoecia with aberrant style morphology. The double mutant sty1-1 and sty2-1 has a reduction in the amount of stylar and stigmatic tissues and decreased proliferation of stylar xylem, as well as shorter siliques and rosette and cauline leaves with a higher degree of serration. Hypersensitive to 1-N-naphthylphtalamic acid (NPA), but restored by exogenous application of auxin.</text>
</comment>
<comment type="similarity">
    <text evidence="12">Belongs to the SHI protein family.</text>
</comment>
<comment type="sequence caution" evidence="12">
    <conflict type="frameshift">
        <sequence resource="EMBL" id="BX824145"/>
    </conflict>
</comment>
<name>SRS1_ARATH</name>
<protein>
    <recommendedName>
        <fullName>Protein SHI RELATED SEQUENCE 1</fullName>
    </recommendedName>
    <alternativeName>
        <fullName>Protein STYLISH 1</fullName>
    </alternativeName>
</protein>
<reference key="1">
    <citation type="journal article" date="2000" name="Nature">
        <title>Sequence and analysis of chromosome 3 of the plant Arabidopsis thaliana.</title>
        <authorList>
            <person name="Salanoubat M."/>
            <person name="Lemcke K."/>
            <person name="Rieger M."/>
            <person name="Ansorge W."/>
            <person name="Unseld M."/>
            <person name="Fartmann B."/>
            <person name="Valle G."/>
            <person name="Bloecker H."/>
            <person name="Perez-Alonso M."/>
            <person name="Obermaier B."/>
            <person name="Delseny M."/>
            <person name="Boutry M."/>
            <person name="Grivell L.A."/>
            <person name="Mache R."/>
            <person name="Puigdomenech P."/>
            <person name="De Simone V."/>
            <person name="Choisne N."/>
            <person name="Artiguenave F."/>
            <person name="Robert C."/>
            <person name="Brottier P."/>
            <person name="Wincker P."/>
            <person name="Cattolico L."/>
            <person name="Weissenbach J."/>
            <person name="Saurin W."/>
            <person name="Quetier F."/>
            <person name="Schaefer M."/>
            <person name="Mueller-Auer S."/>
            <person name="Gabel C."/>
            <person name="Fuchs M."/>
            <person name="Benes V."/>
            <person name="Wurmbach E."/>
            <person name="Drzonek H."/>
            <person name="Erfle H."/>
            <person name="Jordan N."/>
            <person name="Bangert S."/>
            <person name="Wiedelmann R."/>
            <person name="Kranz H."/>
            <person name="Voss H."/>
            <person name="Holland R."/>
            <person name="Brandt P."/>
            <person name="Nyakatura G."/>
            <person name="Vezzi A."/>
            <person name="D'Angelo M."/>
            <person name="Pallavicini A."/>
            <person name="Toppo S."/>
            <person name="Simionati B."/>
            <person name="Conrad A."/>
            <person name="Hornischer K."/>
            <person name="Kauer G."/>
            <person name="Loehnert T.-H."/>
            <person name="Nordsiek G."/>
            <person name="Reichelt J."/>
            <person name="Scharfe M."/>
            <person name="Schoen O."/>
            <person name="Bargues M."/>
            <person name="Terol J."/>
            <person name="Climent J."/>
            <person name="Navarro P."/>
            <person name="Collado C."/>
            <person name="Perez-Perez A."/>
            <person name="Ottenwaelder B."/>
            <person name="Duchemin D."/>
            <person name="Cooke R."/>
            <person name="Laudie M."/>
            <person name="Berger-Llauro C."/>
            <person name="Purnelle B."/>
            <person name="Masuy D."/>
            <person name="de Haan M."/>
            <person name="Maarse A.C."/>
            <person name="Alcaraz J.-P."/>
            <person name="Cottet A."/>
            <person name="Casacuberta E."/>
            <person name="Monfort A."/>
            <person name="Argiriou A."/>
            <person name="Flores M."/>
            <person name="Liguori R."/>
            <person name="Vitale D."/>
            <person name="Mannhaupt G."/>
            <person name="Haase D."/>
            <person name="Schoof H."/>
            <person name="Rudd S."/>
            <person name="Zaccaria P."/>
            <person name="Mewes H.-W."/>
            <person name="Mayer K.F.X."/>
            <person name="Kaul S."/>
            <person name="Town C.D."/>
            <person name="Koo H.L."/>
            <person name="Tallon L.J."/>
            <person name="Jenkins J."/>
            <person name="Rooney T."/>
            <person name="Rizzo M."/>
            <person name="Walts A."/>
            <person name="Utterback T."/>
            <person name="Fujii C.Y."/>
            <person name="Shea T.P."/>
            <person name="Creasy T.H."/>
            <person name="Haas B."/>
            <person name="Maiti R."/>
            <person name="Wu D."/>
            <person name="Peterson J."/>
            <person name="Van Aken S."/>
            <person name="Pai G."/>
            <person name="Militscher J."/>
            <person name="Sellers P."/>
            <person name="Gill J.E."/>
            <person name="Feldblyum T.V."/>
            <person name="Preuss D."/>
            <person name="Lin X."/>
            <person name="Nierman W.C."/>
            <person name="Salzberg S.L."/>
            <person name="White O."/>
            <person name="Venter J.C."/>
            <person name="Fraser C.M."/>
            <person name="Kaneko T."/>
            <person name="Nakamura Y."/>
            <person name="Sato S."/>
            <person name="Kato T."/>
            <person name="Asamizu E."/>
            <person name="Sasamoto S."/>
            <person name="Kimura T."/>
            <person name="Idesawa K."/>
            <person name="Kawashima K."/>
            <person name="Kishida Y."/>
            <person name="Kiyokawa C."/>
            <person name="Kohara M."/>
            <person name="Matsumoto M."/>
            <person name="Matsuno A."/>
            <person name="Muraki A."/>
            <person name="Nakayama S."/>
            <person name="Nakazaki N."/>
            <person name="Shinpo S."/>
            <person name="Takeuchi C."/>
            <person name="Wada T."/>
            <person name="Watanabe A."/>
            <person name="Yamada M."/>
            <person name="Yasuda M."/>
            <person name="Tabata S."/>
        </authorList>
    </citation>
    <scope>NUCLEOTIDE SEQUENCE [LARGE SCALE GENOMIC DNA]</scope>
    <source>
        <strain>cv. Columbia</strain>
    </source>
</reference>
<reference key="2">
    <citation type="journal article" date="2017" name="Plant J.">
        <title>Araport11: a complete reannotation of the Arabidopsis thaliana reference genome.</title>
        <authorList>
            <person name="Cheng C.Y."/>
            <person name="Krishnakumar V."/>
            <person name="Chan A.P."/>
            <person name="Thibaud-Nissen F."/>
            <person name="Schobel S."/>
            <person name="Town C.D."/>
        </authorList>
    </citation>
    <scope>GENOME REANNOTATION</scope>
    <source>
        <strain>cv. Columbia</strain>
    </source>
</reference>
<reference key="3">
    <citation type="journal article" date="2004" name="Genome Res.">
        <title>Whole genome sequence comparisons and 'full-length' cDNA sequences: a combined approach to evaluate and improve Arabidopsis genome annotation.</title>
        <authorList>
            <person name="Castelli V."/>
            <person name="Aury J.-M."/>
            <person name="Jaillon O."/>
            <person name="Wincker P."/>
            <person name="Clepet C."/>
            <person name="Menard M."/>
            <person name="Cruaud C."/>
            <person name="Quetier F."/>
            <person name="Scarpelli C."/>
            <person name="Schaechter V."/>
            <person name="Temple G."/>
            <person name="Caboche M."/>
            <person name="Weissenbach J."/>
            <person name="Salanoubat M."/>
        </authorList>
    </citation>
    <scope>NUCLEOTIDE SEQUENCE [LARGE SCALE MRNA] (ISOFORM 1)</scope>
    <source>
        <strain>cv. Columbia</strain>
    </source>
</reference>
<reference key="4">
    <citation type="submission" date="2006-12" db="EMBL/GenBank/DDBJ databases">
        <title>Arabidopsis ORF clones.</title>
        <authorList>
            <person name="Bautista V.R."/>
            <person name="Kim C.J."/>
            <person name="Chen H."/>
            <person name="Quinitio C."/>
            <person name="Ecker J.R."/>
        </authorList>
    </citation>
    <scope>NUCLEOTIDE SEQUENCE [LARGE SCALE MRNA] (ISOFORM 2)</scope>
    <source>
        <strain>cv. Columbia</strain>
    </source>
</reference>
<reference key="5">
    <citation type="submission" date="2009-03" db="EMBL/GenBank/DDBJ databases">
        <title>ORF cloning and analysis of Arabidopsis transcription factor genes.</title>
        <authorList>
            <person name="Fujita M."/>
            <person name="Mizukado S."/>
            <person name="Seki M."/>
            <person name="Shinozaki K."/>
            <person name="Mitsuda N."/>
            <person name="Takiguchi Y."/>
            <person name="Takagi M."/>
        </authorList>
    </citation>
    <scope>NUCLEOTIDE SEQUENCE [LARGE SCALE MRNA] (ISOFORM 2)</scope>
</reference>
<reference key="6">
    <citation type="journal article" date="2002" name="Development">
        <title>STY1 and STY2 promote the formation of apical tissues during Arabidopsis gynoecium development.</title>
        <authorList>
            <person name="Kuusk S."/>
            <person name="Sohlberg J.J."/>
            <person name="Long J.A."/>
            <person name="Fridborg I."/>
            <person name="Sundberg E."/>
        </authorList>
    </citation>
    <scope>FUNCTION</scope>
    <scope>DISRUPTION PHENOTYPE</scope>
    <scope>DEVELOPMENTAL STAGE</scope>
    <scope>TISSUE SPECIFICITY</scope>
    <source>
        <strain>cv. Columbia</strain>
    </source>
</reference>
<reference key="7">
    <citation type="journal article" date="2006" name="Plant J.">
        <title>Functionally redundant SHI family genes regulate Arabidopsis gynoecium development in a dose-dependent manner.</title>
        <authorList>
            <person name="Kuusk S."/>
            <person name="Sohlberg J.J."/>
            <person name="Magnus Eklund D."/>
            <person name="Sundberg E."/>
        </authorList>
    </citation>
    <scope>FUNCTION</scope>
    <scope>DISRUPTION PHENOTYPE</scope>
    <scope>INTERACTION WITH LRP1</scope>
    <scope>GENE FAMILY</scope>
    <scope>NOMENCLATURE</scope>
</reference>
<reference key="8">
    <citation type="journal article" date="2006" name="Plant J.">
        <title>STY1 regulates auxin homeostasis and affects apical-basal patterning of the Arabidopsis gynoecium.</title>
        <authorList>
            <person name="Sohlberg J.J."/>
            <person name="Myrenaas M."/>
            <person name="Kuusk S."/>
            <person name="Lagercrantz U."/>
            <person name="Kowalczyk M."/>
            <person name="Sandberg G."/>
            <person name="Sundberg E."/>
        </authorList>
    </citation>
    <scope>FUNCTION</scope>
    <scope>DISRUPTION PHENOTYPE</scope>
</reference>
<reference key="9">
    <citation type="journal article" date="2008" name="New Phytol.">
        <title>Auxin can act independently of CRC, LUG, SEU, SPT and STY1 in style development but not apical-basal patterning of the Arabidopsis gynoecium.</title>
        <authorList>
            <person name="Staaldal V."/>
            <person name="Sohlberg J.J."/>
            <person name="Eklund D.M."/>
            <person name="Ljung K."/>
            <person name="Sundberg E."/>
        </authorList>
    </citation>
    <scope>FUNCTION</scope>
    <scope>DISRUPTION PHENOTYPE</scope>
    <source>
        <strain>cv. Columbia</strain>
    </source>
</reference>
<reference key="10">
    <citation type="journal article" date="2010" name="Plant Cell">
        <title>The Arabidopsis thaliana STYLISH1 protein acts as a transcriptional activator regulating auxin biosynthesis.</title>
        <authorList>
            <person name="Eklund D.M."/>
            <person name="Staaldal V."/>
            <person name="Valsecchi I."/>
            <person name="Cierlik I."/>
            <person name="Eriksson C."/>
            <person name="Hiratsu K."/>
            <person name="Ohme-Takagi M."/>
            <person name="Sundstroem J.F."/>
            <person name="Thelander M."/>
            <person name="Ezcurra I."/>
            <person name="Sundberg E."/>
        </authorList>
    </citation>
    <scope>FUNCTION</scope>
    <scope>SUBCELLULAR LOCATION</scope>
    <scope>DIMERIZATION</scope>
    <scope>HOMODIMER</scope>
</reference>
<reference key="11">
    <citation type="journal article" date="2011" name="Plant Physiol.">
        <title>Expression of Arabidopsis SHORT INTERNODES/STYLISH family genes in auxin biosynthesis zones of aerial organs is dependent on a GCC box-like regulatory element.</title>
        <authorList>
            <person name="Eklund D.M."/>
            <person name="Cierlik I."/>
            <person name="Staaldal V."/>
            <person name="Claes A.R."/>
            <person name="Vestman D."/>
            <person name="Chandler J."/>
            <person name="Sundberg E."/>
        </authorList>
    </citation>
    <scope>INDUCTION BY ESR1 AND ESR2</scope>
    <scope>GENE FAMILY</scope>
</reference>
<reference key="12">
    <citation type="journal article" date="2012" name="Plant Mol. Biol.">
        <title>The Arabidopsis thaliana transcriptional activator STYLISH1 regulates genes affecting stamen development, cell expansion and timing of flowering.</title>
        <authorList>
            <person name="Staaldal V."/>
            <person name="Cierlik I."/>
            <person name="Chen S."/>
            <person name="Landberg K."/>
            <person name="Baylis T."/>
            <person name="Myrenaas M."/>
            <person name="Sundstroem J.F."/>
            <person name="Eklund D.M."/>
            <person name="Ljung K."/>
            <person name="Sundberg E."/>
        </authorList>
    </citation>
    <scope>FUNCTION</scope>
</reference>
<keyword id="KW-0010">Activator</keyword>
<keyword id="KW-0025">Alternative splicing</keyword>
<keyword id="KW-0073">Auxin biosynthesis</keyword>
<keyword id="KW-0927">Auxin signaling pathway</keyword>
<keyword id="KW-0217">Developmental protein</keyword>
<keyword id="KW-0238">DNA-binding</keyword>
<keyword id="KW-0479">Metal-binding</keyword>
<keyword id="KW-0539">Nucleus</keyword>
<keyword id="KW-1185">Reference proteome</keyword>
<keyword id="KW-0862">Zinc</keyword>
<organism>
    <name type="scientific">Arabidopsis thaliana</name>
    <name type="common">Mouse-ear cress</name>
    <dbReference type="NCBI Taxonomy" id="3702"/>
    <lineage>
        <taxon>Eukaryota</taxon>
        <taxon>Viridiplantae</taxon>
        <taxon>Streptophyta</taxon>
        <taxon>Embryophyta</taxon>
        <taxon>Tracheophyta</taxon>
        <taxon>Spermatophyta</taxon>
        <taxon>Magnoliopsida</taxon>
        <taxon>eudicotyledons</taxon>
        <taxon>Gunneridae</taxon>
        <taxon>Pentapetalae</taxon>
        <taxon>rosids</taxon>
        <taxon>malvids</taxon>
        <taxon>Brassicales</taxon>
        <taxon>Brassicaceae</taxon>
        <taxon>Camelineae</taxon>
        <taxon>Arabidopsis</taxon>
    </lineage>
</organism>
<gene>
    <name type="primary">SRS1</name>
    <name type="synonym">STY1</name>
    <name type="ordered locus">At3g51060</name>
    <name type="ORF">F24M12.100</name>
</gene>
<evidence type="ECO:0000250" key="1"/>
<evidence type="ECO:0000256" key="2">
    <source>
        <dbReference type="SAM" id="MobiDB-lite"/>
    </source>
</evidence>
<evidence type="ECO:0000269" key="3">
    <source>
    </source>
</evidence>
<evidence type="ECO:0000269" key="4">
    <source>
    </source>
</evidence>
<evidence type="ECO:0000269" key="5">
    <source>
    </source>
</evidence>
<evidence type="ECO:0000269" key="6">
    <source>
    </source>
</evidence>
<evidence type="ECO:0000269" key="7">
    <source>
    </source>
</evidence>
<evidence type="ECO:0000269" key="8">
    <source>
    </source>
</evidence>
<evidence type="ECO:0000269" key="9">
    <source>
    </source>
</evidence>
<evidence type="ECO:0000303" key="10">
    <source ref="4"/>
</evidence>
<evidence type="ECO:0000303" key="11">
    <source ref="5"/>
</evidence>
<evidence type="ECO:0000305" key="12"/>